<dbReference type="EC" id="2.6.1.87" evidence="1"/>
<dbReference type="EMBL" id="AE004091">
    <property type="protein sequence ID" value="AAG06940.1"/>
    <property type="molecule type" value="Genomic_DNA"/>
</dbReference>
<dbReference type="PIR" id="C83201">
    <property type="entry name" value="C83201"/>
</dbReference>
<dbReference type="RefSeq" id="NP_252242.1">
    <property type="nucleotide sequence ID" value="NC_002516.2"/>
</dbReference>
<dbReference type="RefSeq" id="WP_003112882.1">
    <property type="nucleotide sequence ID" value="NZ_QZGE01000001.1"/>
</dbReference>
<dbReference type="SMR" id="Q9HY65"/>
<dbReference type="FunCoup" id="Q9HY65">
    <property type="interactions" value="688"/>
</dbReference>
<dbReference type="STRING" id="208964.PA3552"/>
<dbReference type="PaxDb" id="208964-PA3552"/>
<dbReference type="DNASU" id="879143"/>
<dbReference type="GeneID" id="879143"/>
<dbReference type="KEGG" id="pae:PA3552"/>
<dbReference type="PATRIC" id="fig|208964.12.peg.3717"/>
<dbReference type="PseudoCAP" id="PA3552"/>
<dbReference type="HOGENOM" id="CLU_033332_0_3_6"/>
<dbReference type="InParanoid" id="Q9HY65"/>
<dbReference type="OrthoDB" id="9804264at2"/>
<dbReference type="PhylomeDB" id="Q9HY65"/>
<dbReference type="BioCyc" id="PAER208964:G1FZ6-3620-MONOMER"/>
<dbReference type="UniPathway" id="UPA00030"/>
<dbReference type="UniPathway" id="UPA00032">
    <property type="reaction ID" value="UER00493"/>
</dbReference>
<dbReference type="Proteomes" id="UP000002438">
    <property type="component" value="Chromosome"/>
</dbReference>
<dbReference type="GO" id="GO:0016020">
    <property type="term" value="C:membrane"/>
    <property type="evidence" value="ECO:0007669"/>
    <property type="project" value="GOC"/>
</dbReference>
<dbReference type="GO" id="GO:0030170">
    <property type="term" value="F:pyridoxal phosphate binding"/>
    <property type="evidence" value="ECO:0000318"/>
    <property type="project" value="GO_Central"/>
</dbReference>
<dbReference type="GO" id="GO:0008483">
    <property type="term" value="F:transaminase activity"/>
    <property type="evidence" value="ECO:0000318"/>
    <property type="project" value="GO_Central"/>
</dbReference>
<dbReference type="GO" id="GO:0099620">
    <property type="term" value="F:UDP-4-amino-4-deoxy-L-arabinose aminotransferase"/>
    <property type="evidence" value="ECO:0007669"/>
    <property type="project" value="UniProtKB-EC"/>
</dbReference>
<dbReference type="GO" id="GO:0009245">
    <property type="term" value="P:lipid A biosynthetic process"/>
    <property type="evidence" value="ECO:0007669"/>
    <property type="project" value="UniProtKB-KW"/>
</dbReference>
<dbReference type="GO" id="GO:0009103">
    <property type="term" value="P:lipopolysaccharide biosynthetic process"/>
    <property type="evidence" value="ECO:0007669"/>
    <property type="project" value="UniProtKB-UniRule"/>
</dbReference>
<dbReference type="GO" id="GO:0000271">
    <property type="term" value="P:polysaccharide biosynthetic process"/>
    <property type="evidence" value="ECO:0000318"/>
    <property type="project" value="GO_Central"/>
</dbReference>
<dbReference type="GO" id="GO:0046677">
    <property type="term" value="P:response to antibiotic"/>
    <property type="evidence" value="ECO:0007669"/>
    <property type="project" value="UniProtKB-KW"/>
</dbReference>
<dbReference type="CDD" id="cd00616">
    <property type="entry name" value="AHBA_syn"/>
    <property type="match status" value="1"/>
</dbReference>
<dbReference type="FunFam" id="3.40.640.10:FF:000040">
    <property type="entry name" value="UDP-4-amino-4-deoxy-L-arabinose--oxoglutarate aminotransferase"/>
    <property type="match status" value="1"/>
</dbReference>
<dbReference type="FunFam" id="3.90.1150.10:FF:000030">
    <property type="entry name" value="UDP-4-amino-4-deoxy-L-arabinose--oxoglutarate aminotransferase"/>
    <property type="match status" value="1"/>
</dbReference>
<dbReference type="Gene3D" id="3.90.1150.10">
    <property type="entry name" value="Aspartate Aminotransferase, domain 1"/>
    <property type="match status" value="1"/>
</dbReference>
<dbReference type="Gene3D" id="3.40.640.10">
    <property type="entry name" value="Type I PLP-dependent aspartate aminotransferase-like (Major domain)"/>
    <property type="match status" value="1"/>
</dbReference>
<dbReference type="HAMAP" id="MF_01167">
    <property type="entry name" value="ArnB_transfer"/>
    <property type="match status" value="1"/>
</dbReference>
<dbReference type="InterPro" id="IPR022850">
    <property type="entry name" value="ArnB_NH2Trfase"/>
</dbReference>
<dbReference type="InterPro" id="IPR000653">
    <property type="entry name" value="DegT/StrS_aminotransferase"/>
</dbReference>
<dbReference type="InterPro" id="IPR015424">
    <property type="entry name" value="PyrdxlP-dep_Trfase"/>
</dbReference>
<dbReference type="InterPro" id="IPR015421">
    <property type="entry name" value="PyrdxlP-dep_Trfase_major"/>
</dbReference>
<dbReference type="InterPro" id="IPR015422">
    <property type="entry name" value="PyrdxlP-dep_Trfase_small"/>
</dbReference>
<dbReference type="NCBIfam" id="NF008658">
    <property type="entry name" value="PRK11658.1"/>
    <property type="match status" value="1"/>
</dbReference>
<dbReference type="PANTHER" id="PTHR30244:SF34">
    <property type="entry name" value="DTDP-4-AMINO-4,6-DIDEOXYGALACTOSE TRANSAMINASE"/>
    <property type="match status" value="1"/>
</dbReference>
<dbReference type="PANTHER" id="PTHR30244">
    <property type="entry name" value="TRANSAMINASE"/>
    <property type="match status" value="1"/>
</dbReference>
<dbReference type="Pfam" id="PF01041">
    <property type="entry name" value="DegT_DnrJ_EryC1"/>
    <property type="match status" value="1"/>
</dbReference>
<dbReference type="PIRSF" id="PIRSF000390">
    <property type="entry name" value="PLP_StrS"/>
    <property type="match status" value="1"/>
</dbReference>
<dbReference type="SUPFAM" id="SSF53383">
    <property type="entry name" value="PLP-dependent transferases"/>
    <property type="match status" value="1"/>
</dbReference>
<protein>
    <recommendedName>
        <fullName evidence="1">UDP-4-amino-4-deoxy-L-arabinose--oxoglutarate aminotransferase</fullName>
        <ecNumber evidence="1">2.6.1.87</ecNumber>
    </recommendedName>
    <alternativeName>
        <fullName evidence="1">UDP-(beta-L-threo-pentapyranosyl-4''-ulose diphosphate) aminotransferase</fullName>
        <shortName evidence="1">UDP-Ara4O aminotransferase</shortName>
    </alternativeName>
    <alternativeName>
        <fullName evidence="1">UDP-4-amino-4-deoxy-L-arabinose aminotransferase</fullName>
    </alternativeName>
</protein>
<keyword id="KW-0032">Aminotransferase</keyword>
<keyword id="KW-0046">Antibiotic resistance</keyword>
<keyword id="KW-0441">Lipid A biosynthesis</keyword>
<keyword id="KW-0444">Lipid biosynthesis</keyword>
<keyword id="KW-0443">Lipid metabolism</keyword>
<keyword id="KW-0448">Lipopolysaccharide biosynthesis</keyword>
<keyword id="KW-0663">Pyridoxal phosphate</keyword>
<keyword id="KW-1185">Reference proteome</keyword>
<keyword id="KW-0808">Transferase</keyword>
<feature type="chain" id="PRO_0000110023" description="UDP-4-amino-4-deoxy-L-arabinose--oxoglutarate aminotransferase">
    <location>
        <begin position="1"/>
        <end position="382"/>
    </location>
</feature>
<feature type="modified residue" description="N6-(pyridoxal phosphate)lysine" evidence="1">
    <location>
        <position position="183"/>
    </location>
</feature>
<sequence>MSLDFLPFSRPSIGEDEIAAVEQVLRSGWITTGPKNQELEQRFAERLGCRHAVALSSATGALHVTLLALGIGPGDEVITPSLTWVSTANVITLLGATPVFVDVDRDTLMCSAQAVEAAIGPRTRAIVPVHYAGSTLDLEGLRTVAGRHGIALVEDAAHAVGSEYRGRPVGSRGTAIFSFHAIKNLTCAEGAMFVSDDSALAERVRRLKFHGLGVDAYDRLSHGRKPQAEVIEPGFKYNLADLNAALALVQLKRLDALNARRQALAERYLERLAGLPLAPLGLPAHKQRHAWHLFILRIDAEVCGLGRDAFMEALKARGIGSGIHFIASHLHHYYRQRQPRLSLPNSEWNSARLCSIPLFPDMRDDDIERVARAIEEILEKRR</sequence>
<gene>
    <name evidence="1" type="primary">arnB</name>
    <name type="ordered locus">PA3552</name>
</gene>
<proteinExistence type="inferred from homology"/>
<name>ARNB_PSEAE</name>
<accession>Q9HY65</accession>
<reference key="1">
    <citation type="journal article" date="2000" name="Nature">
        <title>Complete genome sequence of Pseudomonas aeruginosa PAO1, an opportunistic pathogen.</title>
        <authorList>
            <person name="Stover C.K."/>
            <person name="Pham X.-Q.T."/>
            <person name="Erwin A.L."/>
            <person name="Mizoguchi S.D."/>
            <person name="Warrener P."/>
            <person name="Hickey M.J."/>
            <person name="Brinkman F.S.L."/>
            <person name="Hufnagle W.O."/>
            <person name="Kowalik D.J."/>
            <person name="Lagrou M."/>
            <person name="Garber R.L."/>
            <person name="Goltry L."/>
            <person name="Tolentino E."/>
            <person name="Westbrock-Wadman S."/>
            <person name="Yuan Y."/>
            <person name="Brody L.L."/>
            <person name="Coulter S.N."/>
            <person name="Folger K.R."/>
            <person name="Kas A."/>
            <person name="Larbig K."/>
            <person name="Lim R.M."/>
            <person name="Smith K.A."/>
            <person name="Spencer D.H."/>
            <person name="Wong G.K.-S."/>
            <person name="Wu Z."/>
            <person name="Paulsen I.T."/>
            <person name="Reizer J."/>
            <person name="Saier M.H. Jr."/>
            <person name="Hancock R.E.W."/>
            <person name="Lory S."/>
            <person name="Olson M.V."/>
        </authorList>
    </citation>
    <scope>NUCLEOTIDE SEQUENCE [LARGE SCALE GENOMIC DNA]</scope>
    <source>
        <strain>ATCC 15692 / DSM 22644 / CIP 104116 / JCM 14847 / LMG 12228 / 1C / PRS 101 / PAO1</strain>
    </source>
</reference>
<evidence type="ECO:0000255" key="1">
    <source>
        <dbReference type="HAMAP-Rule" id="MF_01167"/>
    </source>
</evidence>
<comment type="function">
    <text evidence="1">Catalyzes the conversion of UDP-4-keto-arabinose (UDP-Ara4O) to UDP-4-amino-4-deoxy-L-arabinose (UDP-L-Ara4N). The modified arabinose is attached to lipid A and is required for resistance to polymyxin and cationic antimicrobial peptides.</text>
</comment>
<comment type="catalytic activity">
    <reaction evidence="1">
        <text>UDP-4-amino-4-deoxy-beta-L-arabinose + 2-oxoglutarate = UDP-beta-L-threo-pentopyranos-4-ulose + L-glutamate</text>
        <dbReference type="Rhea" id="RHEA:24710"/>
        <dbReference type="ChEBI" id="CHEBI:16810"/>
        <dbReference type="ChEBI" id="CHEBI:29985"/>
        <dbReference type="ChEBI" id="CHEBI:58708"/>
        <dbReference type="ChEBI" id="CHEBI:58710"/>
        <dbReference type="EC" id="2.6.1.87"/>
    </reaction>
</comment>
<comment type="cofactor">
    <cofactor evidence="1">
        <name>pyridoxal 5'-phosphate</name>
        <dbReference type="ChEBI" id="CHEBI:597326"/>
    </cofactor>
</comment>
<comment type="pathway">
    <text evidence="1">Nucleotide-sugar biosynthesis; UDP-4-deoxy-4-formamido-beta-L-arabinose biosynthesis; UDP-4-deoxy-4-formamido-beta-L-arabinose from UDP-alpha-D-glucuronate: step 2/3.</text>
</comment>
<comment type="pathway">
    <text evidence="1">Bacterial outer membrane biogenesis; lipopolysaccharide biosynthesis.</text>
</comment>
<comment type="subunit">
    <text evidence="1">Homodimer.</text>
</comment>
<comment type="similarity">
    <text evidence="1">Belongs to the DegT/DnrJ/EryC1 family. ArnB subfamily.</text>
</comment>
<organism>
    <name type="scientific">Pseudomonas aeruginosa (strain ATCC 15692 / DSM 22644 / CIP 104116 / JCM 14847 / LMG 12228 / 1C / PRS 101 / PAO1)</name>
    <dbReference type="NCBI Taxonomy" id="208964"/>
    <lineage>
        <taxon>Bacteria</taxon>
        <taxon>Pseudomonadati</taxon>
        <taxon>Pseudomonadota</taxon>
        <taxon>Gammaproteobacteria</taxon>
        <taxon>Pseudomonadales</taxon>
        <taxon>Pseudomonadaceae</taxon>
        <taxon>Pseudomonas</taxon>
    </lineage>
</organism>